<name>CSLD5_ARATH</name>
<accession>Q9SRW9</accession>
<evidence type="ECO:0000255" key="1"/>
<evidence type="ECO:0000256" key="2">
    <source>
        <dbReference type="SAM" id="MobiDB-lite"/>
    </source>
</evidence>
<evidence type="ECO:0000269" key="3">
    <source>
    </source>
</evidence>
<evidence type="ECO:0000305" key="4"/>
<evidence type="ECO:0000305" key="5">
    <source>
    </source>
</evidence>
<gene>
    <name type="primary">CSLD5</name>
    <name type="ordered locus">At1g02730</name>
    <name type="ORF">F22D16.26</name>
</gene>
<comment type="function">
    <text evidence="3">Involved in stem and root growth. Possesses xylan and homogalacturonan synthase activity.</text>
</comment>
<comment type="subcellular location">
    <subcellularLocation>
        <location evidence="5">Golgi apparatus membrane</location>
        <topology evidence="5">Multi-pass membrane protein</topology>
    </subcellularLocation>
</comment>
<comment type="tissue specificity">
    <text evidence="3">Expressed in vascular tissues.</text>
</comment>
<comment type="developmental stage">
    <text evidence="3">Expressed at its highest level between 21 and 25 days, during the inflorescence stem elongation phase.</text>
</comment>
<comment type="disruption phenotype">
    <text evidence="3">Significant reduction of root and stem growth, xylan reduction in stem and increased susceptibility to the cellulose synthase inhibitor isoxaben.</text>
</comment>
<comment type="similarity">
    <text evidence="4">Belongs to the glycosyltransferase 2 family. Plant cellulose synthase-like D subfamily.</text>
</comment>
<comment type="sequence caution" evidence="4">
    <conflict type="frameshift">
        <sequence resource="EMBL" id="AK226870"/>
    </conflict>
</comment>
<organism>
    <name type="scientific">Arabidopsis thaliana</name>
    <name type="common">Mouse-ear cress</name>
    <dbReference type="NCBI Taxonomy" id="3702"/>
    <lineage>
        <taxon>Eukaryota</taxon>
        <taxon>Viridiplantae</taxon>
        <taxon>Streptophyta</taxon>
        <taxon>Embryophyta</taxon>
        <taxon>Tracheophyta</taxon>
        <taxon>Spermatophyta</taxon>
        <taxon>Magnoliopsida</taxon>
        <taxon>eudicotyledons</taxon>
        <taxon>Gunneridae</taxon>
        <taxon>Pentapetalae</taxon>
        <taxon>rosids</taxon>
        <taxon>malvids</taxon>
        <taxon>Brassicales</taxon>
        <taxon>Brassicaceae</taxon>
        <taxon>Camelineae</taxon>
        <taxon>Arabidopsis</taxon>
    </lineage>
</organism>
<reference key="1">
    <citation type="journal article" date="2000" name="Nature">
        <title>Sequence and analysis of chromosome 1 of the plant Arabidopsis thaliana.</title>
        <authorList>
            <person name="Theologis A."/>
            <person name="Ecker J.R."/>
            <person name="Palm C.J."/>
            <person name="Federspiel N.A."/>
            <person name="Kaul S."/>
            <person name="White O."/>
            <person name="Alonso J."/>
            <person name="Altafi H."/>
            <person name="Araujo R."/>
            <person name="Bowman C.L."/>
            <person name="Brooks S.Y."/>
            <person name="Buehler E."/>
            <person name="Chan A."/>
            <person name="Chao Q."/>
            <person name="Chen H."/>
            <person name="Cheuk R.F."/>
            <person name="Chin C.W."/>
            <person name="Chung M.K."/>
            <person name="Conn L."/>
            <person name="Conway A.B."/>
            <person name="Conway A.R."/>
            <person name="Creasy T.H."/>
            <person name="Dewar K."/>
            <person name="Dunn P."/>
            <person name="Etgu P."/>
            <person name="Feldblyum T.V."/>
            <person name="Feng J.-D."/>
            <person name="Fong B."/>
            <person name="Fujii C.Y."/>
            <person name="Gill J.E."/>
            <person name="Goldsmith A.D."/>
            <person name="Haas B."/>
            <person name="Hansen N.F."/>
            <person name="Hughes B."/>
            <person name="Huizar L."/>
            <person name="Hunter J.L."/>
            <person name="Jenkins J."/>
            <person name="Johnson-Hopson C."/>
            <person name="Khan S."/>
            <person name="Khaykin E."/>
            <person name="Kim C.J."/>
            <person name="Koo H.L."/>
            <person name="Kremenetskaia I."/>
            <person name="Kurtz D.B."/>
            <person name="Kwan A."/>
            <person name="Lam B."/>
            <person name="Langin-Hooper S."/>
            <person name="Lee A."/>
            <person name="Lee J.M."/>
            <person name="Lenz C.A."/>
            <person name="Li J.H."/>
            <person name="Li Y.-P."/>
            <person name="Lin X."/>
            <person name="Liu S.X."/>
            <person name="Liu Z.A."/>
            <person name="Luros J.S."/>
            <person name="Maiti R."/>
            <person name="Marziali A."/>
            <person name="Militscher J."/>
            <person name="Miranda M."/>
            <person name="Nguyen M."/>
            <person name="Nierman W.C."/>
            <person name="Osborne B.I."/>
            <person name="Pai G."/>
            <person name="Peterson J."/>
            <person name="Pham P.K."/>
            <person name="Rizzo M."/>
            <person name="Rooney T."/>
            <person name="Rowley D."/>
            <person name="Sakano H."/>
            <person name="Salzberg S.L."/>
            <person name="Schwartz J.R."/>
            <person name="Shinn P."/>
            <person name="Southwick A.M."/>
            <person name="Sun H."/>
            <person name="Tallon L.J."/>
            <person name="Tambunga G."/>
            <person name="Toriumi M.J."/>
            <person name="Town C.D."/>
            <person name="Utterback T."/>
            <person name="Van Aken S."/>
            <person name="Vaysberg M."/>
            <person name="Vysotskaia V.S."/>
            <person name="Walker M."/>
            <person name="Wu D."/>
            <person name="Yu G."/>
            <person name="Fraser C.M."/>
            <person name="Venter J.C."/>
            <person name="Davis R.W."/>
        </authorList>
    </citation>
    <scope>NUCLEOTIDE SEQUENCE [LARGE SCALE GENOMIC DNA]</scope>
    <source>
        <strain>cv. Columbia</strain>
    </source>
</reference>
<reference key="2">
    <citation type="journal article" date="2017" name="Plant J.">
        <title>Araport11: a complete reannotation of the Arabidopsis thaliana reference genome.</title>
        <authorList>
            <person name="Cheng C.Y."/>
            <person name="Krishnakumar V."/>
            <person name="Chan A.P."/>
            <person name="Thibaud-Nissen F."/>
            <person name="Schobel S."/>
            <person name="Town C.D."/>
        </authorList>
    </citation>
    <scope>GENOME REANNOTATION</scope>
    <source>
        <strain>cv. Columbia</strain>
    </source>
</reference>
<reference key="3">
    <citation type="submission" date="2006-07" db="EMBL/GenBank/DDBJ databases">
        <title>Large-scale analysis of RIKEN Arabidopsis full-length (RAFL) cDNAs.</title>
        <authorList>
            <person name="Totoki Y."/>
            <person name="Seki M."/>
            <person name="Ishida J."/>
            <person name="Nakajima M."/>
            <person name="Enju A."/>
            <person name="Kamiya A."/>
            <person name="Narusaka M."/>
            <person name="Shin-i T."/>
            <person name="Nakagawa M."/>
            <person name="Sakamoto N."/>
            <person name="Oishi K."/>
            <person name="Kohara Y."/>
            <person name="Kobayashi M."/>
            <person name="Toyoda A."/>
            <person name="Sakaki Y."/>
            <person name="Sakurai T."/>
            <person name="Iida K."/>
            <person name="Akiyama K."/>
            <person name="Satou M."/>
            <person name="Toyoda T."/>
            <person name="Konagaya A."/>
            <person name="Carninci P."/>
            <person name="Kawai J."/>
            <person name="Hayashizaki Y."/>
            <person name="Shinozaki K."/>
        </authorList>
    </citation>
    <scope>NUCLEOTIDE SEQUENCE [LARGE SCALE MRNA]</scope>
    <source>
        <strain>cv. Columbia</strain>
    </source>
</reference>
<reference key="4">
    <citation type="journal article" date="2000" name="Plant Physiol.">
        <title>The cellulose synthase superfamily.</title>
        <authorList>
            <person name="Richmond T.A."/>
            <person name="Somerville C.R."/>
        </authorList>
    </citation>
    <scope>GENE FAMILY</scope>
    <scope>NOMENCLATURE</scope>
</reference>
<reference key="5">
    <citation type="journal article" date="2007" name="Plant J.">
        <title>Disruption of ATCSLD5 results in reduced growth, reduced xylan and homogalacturonan synthase activity and altered xylan occurrence in Arabidopsis.</title>
        <authorList>
            <person name="Bernal A.J."/>
            <person name="Jensen J.K."/>
            <person name="Harholt J."/>
            <person name="Soerensen S."/>
            <person name="Moller I."/>
            <person name="Blaukopf C."/>
            <person name="Johansen B."/>
            <person name="de Lotto R."/>
            <person name="Pauly M."/>
            <person name="Scheller H.V."/>
            <person name="Willats W.G.T."/>
        </authorList>
    </citation>
    <scope>FUNCTION</scope>
    <scope>SUBCELLULAR LOCATION</scope>
    <scope>TISSUE SPECIFICITY</scope>
    <scope>DEVELOPMENTAL STAGE</scope>
    <scope>DISRUPTION PHENOTYPE</scope>
</reference>
<proteinExistence type="evidence at transcript level"/>
<feature type="chain" id="PRO_0000319350" description="Cellulose synthase-like protein D5">
    <location>
        <begin position="1"/>
        <end position="1181"/>
    </location>
</feature>
<feature type="transmembrane region" description="Helical" evidence="1">
    <location>
        <begin position="312"/>
        <end position="332"/>
    </location>
</feature>
<feature type="transmembrane region" description="Helical" evidence="1">
    <location>
        <begin position="343"/>
        <end position="363"/>
    </location>
</feature>
<feature type="transmembrane region" description="Helical" evidence="1">
    <location>
        <begin position="966"/>
        <end position="986"/>
    </location>
</feature>
<feature type="transmembrane region" description="Helical" evidence="1">
    <location>
        <begin position="991"/>
        <end position="1011"/>
    </location>
</feature>
<feature type="transmembrane region" description="Helical" evidence="1">
    <location>
        <begin position="1038"/>
        <end position="1058"/>
    </location>
</feature>
<feature type="transmembrane region" description="Helical" evidence="1">
    <location>
        <begin position="1082"/>
        <end position="1102"/>
    </location>
</feature>
<feature type="transmembrane region" description="Helical" evidence="1">
    <location>
        <begin position="1116"/>
        <end position="1136"/>
    </location>
</feature>
<feature type="transmembrane region" description="Helical" evidence="1">
    <location>
        <begin position="1146"/>
        <end position="1166"/>
    </location>
</feature>
<feature type="region of interest" description="Disordered" evidence="2">
    <location>
        <begin position="1"/>
        <end position="70"/>
    </location>
</feature>
<feature type="region of interest" description="Disordered" evidence="2">
    <location>
        <begin position="202"/>
        <end position="229"/>
    </location>
</feature>
<feature type="coiled-coil region" evidence="1">
    <location>
        <begin position="497"/>
        <end position="542"/>
    </location>
</feature>
<feature type="compositionally biased region" description="Polar residues" evidence="2">
    <location>
        <begin position="1"/>
        <end position="17"/>
    </location>
</feature>
<feature type="compositionally biased region" description="Low complexity" evidence="2">
    <location>
        <begin position="48"/>
        <end position="59"/>
    </location>
</feature>
<feature type="compositionally biased region" description="Acidic residues" evidence="2">
    <location>
        <begin position="210"/>
        <end position="222"/>
    </location>
</feature>
<feature type="active site" evidence="1">
    <location>
        <position position="443"/>
    </location>
</feature>
<feature type="active site" evidence="1">
    <location>
        <position position="884"/>
    </location>
</feature>
<feature type="sequence conflict" description="In Ref. 3; AK226870." evidence="4" ref="3">
    <original>L</original>
    <variation>P</variation>
    <location>
        <position position="1046"/>
    </location>
</feature>
<dbReference type="EC" id="2.4.1.-"/>
<dbReference type="EMBL" id="AC009525">
    <property type="protein sequence ID" value="AAF02892.1"/>
    <property type="molecule type" value="Genomic_DNA"/>
</dbReference>
<dbReference type="EMBL" id="CP002684">
    <property type="protein sequence ID" value="AEE27464.1"/>
    <property type="molecule type" value="Genomic_DNA"/>
</dbReference>
<dbReference type="EMBL" id="AK226870">
    <property type="status" value="NOT_ANNOTATED_CDS"/>
    <property type="molecule type" value="mRNA"/>
</dbReference>
<dbReference type="PIR" id="D86157">
    <property type="entry name" value="D86157"/>
</dbReference>
<dbReference type="RefSeq" id="NP_171773.1">
    <property type="nucleotide sequence ID" value="NM_100153.4"/>
</dbReference>
<dbReference type="SMR" id="Q9SRW9"/>
<dbReference type="FunCoup" id="Q9SRW9">
    <property type="interactions" value="367"/>
</dbReference>
<dbReference type="STRING" id="3702.Q9SRW9"/>
<dbReference type="CAZy" id="GT2">
    <property type="family name" value="Glycosyltransferase Family 2"/>
</dbReference>
<dbReference type="GlyGen" id="Q9SRW9">
    <property type="glycosylation" value="1 site"/>
</dbReference>
<dbReference type="iPTMnet" id="Q9SRW9"/>
<dbReference type="PaxDb" id="3702-AT1G02730.1"/>
<dbReference type="ProteomicsDB" id="224514"/>
<dbReference type="EnsemblPlants" id="AT1G02730.1">
    <property type="protein sequence ID" value="AT1G02730.1"/>
    <property type="gene ID" value="AT1G02730"/>
</dbReference>
<dbReference type="GeneID" id="839467"/>
<dbReference type="Gramene" id="AT1G02730.1">
    <property type="protein sequence ID" value="AT1G02730.1"/>
    <property type="gene ID" value="AT1G02730"/>
</dbReference>
<dbReference type="KEGG" id="ath:AT1G02730"/>
<dbReference type="Araport" id="AT1G02730"/>
<dbReference type="TAIR" id="AT1G02730">
    <property type="gene designation" value="CSLD5"/>
</dbReference>
<dbReference type="eggNOG" id="ENOG502QQG2">
    <property type="taxonomic scope" value="Eukaryota"/>
</dbReference>
<dbReference type="HOGENOM" id="CLU_001418_1_0_1"/>
<dbReference type="InParanoid" id="Q9SRW9"/>
<dbReference type="OMA" id="TEHRGWF"/>
<dbReference type="PhylomeDB" id="Q9SRW9"/>
<dbReference type="BioCyc" id="ARA:AT1G02730-MONOMER"/>
<dbReference type="BRENDA" id="2.4.2.24">
    <property type="organism ID" value="399"/>
</dbReference>
<dbReference type="PRO" id="PR:Q9SRW9"/>
<dbReference type="Proteomes" id="UP000006548">
    <property type="component" value="Chromosome 1"/>
</dbReference>
<dbReference type="ExpressionAtlas" id="Q9SRW9">
    <property type="expression patterns" value="baseline and differential"/>
</dbReference>
<dbReference type="GO" id="GO:0005794">
    <property type="term" value="C:Golgi apparatus"/>
    <property type="evidence" value="ECO:0000314"/>
    <property type="project" value="TAIR"/>
</dbReference>
<dbReference type="GO" id="GO:0000139">
    <property type="term" value="C:Golgi membrane"/>
    <property type="evidence" value="ECO:0007669"/>
    <property type="project" value="UniProtKB-SubCell"/>
</dbReference>
<dbReference type="GO" id="GO:0016760">
    <property type="term" value="F:cellulose synthase (UDP-forming) activity"/>
    <property type="evidence" value="ECO:0007669"/>
    <property type="project" value="InterPro"/>
</dbReference>
<dbReference type="GO" id="GO:0046527">
    <property type="term" value="F:glucosyltransferase activity"/>
    <property type="evidence" value="ECO:0000303"/>
    <property type="project" value="TAIR"/>
</dbReference>
<dbReference type="GO" id="GO:0051753">
    <property type="term" value="F:mannan synthase activity"/>
    <property type="evidence" value="ECO:0000314"/>
    <property type="project" value="TAIR"/>
</dbReference>
<dbReference type="GO" id="GO:0000919">
    <property type="term" value="P:cell plate assembly"/>
    <property type="evidence" value="ECO:0000315"/>
    <property type="project" value="TAIR"/>
</dbReference>
<dbReference type="GO" id="GO:0042546">
    <property type="term" value="P:cell wall biogenesis"/>
    <property type="evidence" value="ECO:0000303"/>
    <property type="project" value="TAIR"/>
</dbReference>
<dbReference type="GO" id="GO:0071555">
    <property type="term" value="P:cell wall organization"/>
    <property type="evidence" value="ECO:0007669"/>
    <property type="project" value="UniProtKB-KW"/>
</dbReference>
<dbReference type="GO" id="GO:0030244">
    <property type="term" value="P:cellulose biosynthetic process"/>
    <property type="evidence" value="ECO:0007669"/>
    <property type="project" value="InterPro"/>
</dbReference>
<dbReference type="GO" id="GO:0006970">
    <property type="term" value="P:response to osmotic stress"/>
    <property type="evidence" value="ECO:0000315"/>
    <property type="project" value="TAIR"/>
</dbReference>
<dbReference type="GO" id="GO:0009651">
    <property type="term" value="P:response to salt stress"/>
    <property type="evidence" value="ECO:0000315"/>
    <property type="project" value="TAIR"/>
</dbReference>
<dbReference type="GO" id="GO:0009414">
    <property type="term" value="P:response to water deprivation"/>
    <property type="evidence" value="ECO:0000315"/>
    <property type="project" value="TAIR"/>
</dbReference>
<dbReference type="GO" id="GO:0048367">
    <property type="term" value="P:shoot system development"/>
    <property type="evidence" value="ECO:0000315"/>
    <property type="project" value="TAIR"/>
</dbReference>
<dbReference type="FunFam" id="3.30.40.10:FF:000869">
    <property type="entry name" value="Cellulose synthase-like protein D3"/>
    <property type="match status" value="1"/>
</dbReference>
<dbReference type="FunFam" id="3.90.550.10:FF:000040">
    <property type="entry name" value="cellulose synthase-like protein D3"/>
    <property type="match status" value="1"/>
</dbReference>
<dbReference type="Gene3D" id="3.90.550.10">
    <property type="entry name" value="Spore Coat Polysaccharide Biosynthesis Protein SpsA, Chain A"/>
    <property type="match status" value="1"/>
</dbReference>
<dbReference type="Gene3D" id="3.30.40.10">
    <property type="entry name" value="Zinc/RING finger domain, C3HC4 (zinc finger)"/>
    <property type="match status" value="1"/>
</dbReference>
<dbReference type="InterPro" id="IPR005150">
    <property type="entry name" value="Cellulose_synth"/>
</dbReference>
<dbReference type="InterPro" id="IPR029044">
    <property type="entry name" value="Nucleotide-diphossugar_trans"/>
</dbReference>
<dbReference type="InterPro" id="IPR013083">
    <property type="entry name" value="Znf_RING/FYVE/PHD"/>
</dbReference>
<dbReference type="PANTHER" id="PTHR13301">
    <property type="entry name" value="X-BOX TRANSCRIPTION FACTOR-RELATED"/>
    <property type="match status" value="1"/>
</dbReference>
<dbReference type="Pfam" id="PF03552">
    <property type="entry name" value="Cellulose_synt"/>
    <property type="match status" value="1"/>
</dbReference>
<dbReference type="Pfam" id="PF14570">
    <property type="entry name" value="zf-RING_4"/>
    <property type="match status" value="1"/>
</dbReference>
<dbReference type="SUPFAM" id="SSF53448">
    <property type="entry name" value="Nucleotide-diphospho-sugar transferases"/>
    <property type="match status" value="1"/>
</dbReference>
<dbReference type="SUPFAM" id="SSF57850">
    <property type="entry name" value="RING/U-box"/>
    <property type="match status" value="1"/>
</dbReference>
<sequence>MVKSAASQSPSPVTITVTPCKGSGDRSLGLTSPIPRASVITNQNSPLSSRATRRTSISSGNRRSNGDEGRYCSMSVEDLTAETTNSECVLSYTVHIPPTPDHQTVFASQESEEDEMLKGNSNQKSFLSGTIFTGGFKSVTRGHVIDCSMDRADPEKKSGQICWLKGCDEKVVHGRCECGFRICRDCYFDCITSGGGNCPGCKEPYRDINDDPETEEEDEEDEAKPLPQMGESKLDKRLSVVKSFKAQNQAGDFDHTRWLFETKGTYGYGNAVWPKDGYGIGSGGGGNGYETPPEFGERSKRPLTRKVSVSAAIISPYRLLIALRLVALGLFLTWRVRHPNREAMWLWGMSTTCELWFALSWLLDQLPKLCPVNRLTDLGVLKERFESPNLRNPKGRSDLPGIDVFVSTADPEKEPPLVTANTILSILAVDYPVEKLACYLSDDGGALLTFEALAQTASFASTWVPFCRKHNIEPRNPEAYFGQKRNFLKNKVRLDFVRERRRVKREYDEFKVRINSLPEAIRRRSDAYNVHEELRAKKKQMEMMMGNNPQETVIVPKATWMSDGSHWPGTWSSGETDNSRGDHAGIIQAMLAPPNAEPVYGAEADAENLIDTTDVDIRLPMLVYVSREKRPGYDHNKKAGAMNALVRTSAIMSNGPFILNLDCDHYIYNSMALREGMCFMLDRGGDRICYVQFPQRFEGIDPNDRYANHNTVFFDVSMRALDGLQGPMYVGTGCIFRRTALYGFSPPRATEHHGWLGRRKVKISLRRPKAMMKKDDEVSLPINGEYNEEENDDGDIESLLLPKRFGNSNSFVASIPVAEYQGRLIQDLQGKGKNSRPAGSLAVPREPLDAATVAEAISVISCFYEDKTEWGKRVGWIYGSVTEDVVTGYRMHNRGWRSIYCVTKRDAFRGTAPINLTDRLHQVLRWATGSVEIFFSRNNAIFATRRMKFLQRVAYFNVGMYPFTSLFLIVYCILPAISLFSGQFIVQSLDITFLIYLLSITLTLCMLSLLEIKWSGITLHEWWRNEQFWVIGGTSAHPAAVLQGLLKVIAGVDISFTLTSKSSAPEDGDDEFADLYVVKWSFLMVPPLTIMMVNMIAIAVGLARTLYSPFPQWSKLVGGVFFSFWVLCHLYPFAKGLMGRRGRVPTIVFVWSGLLSIIVSLLWVYINPPSGKQDYMQFQFP</sequence>
<keyword id="KW-0961">Cell wall biogenesis/degradation</keyword>
<keyword id="KW-0175">Coiled coil</keyword>
<keyword id="KW-0328">Glycosyltransferase</keyword>
<keyword id="KW-0333">Golgi apparatus</keyword>
<keyword id="KW-0472">Membrane</keyword>
<keyword id="KW-1185">Reference proteome</keyword>
<keyword id="KW-0808">Transferase</keyword>
<keyword id="KW-0812">Transmembrane</keyword>
<keyword id="KW-1133">Transmembrane helix</keyword>
<protein>
    <recommendedName>
        <fullName>Cellulose synthase-like protein D5</fullName>
        <shortName>AtCslD5</shortName>
        <ecNumber>2.4.1.-</ecNumber>
    </recommendedName>
</protein>